<comment type="function">
    <text evidence="1">Pyrophosphatase that catalyzes the hydrolysis of nucleoside triphosphates to their monophosphate derivatives, with a high preference for the non-canonical purine nucleotides XTP (xanthosine triphosphate), dITP (deoxyinosine triphosphate) and ITP. Seems to function as a house-cleaning enzyme that removes non-canonical purine nucleotides from the nucleotide pool, thus preventing their incorporation into DNA/RNA and avoiding chromosomal lesions.</text>
</comment>
<comment type="catalytic activity">
    <reaction evidence="1">
        <text>XTP + H2O = XMP + diphosphate + H(+)</text>
        <dbReference type="Rhea" id="RHEA:28610"/>
        <dbReference type="ChEBI" id="CHEBI:15377"/>
        <dbReference type="ChEBI" id="CHEBI:15378"/>
        <dbReference type="ChEBI" id="CHEBI:33019"/>
        <dbReference type="ChEBI" id="CHEBI:57464"/>
        <dbReference type="ChEBI" id="CHEBI:61314"/>
        <dbReference type="EC" id="3.6.1.66"/>
    </reaction>
</comment>
<comment type="catalytic activity">
    <reaction evidence="1">
        <text>dITP + H2O = dIMP + diphosphate + H(+)</text>
        <dbReference type="Rhea" id="RHEA:28342"/>
        <dbReference type="ChEBI" id="CHEBI:15377"/>
        <dbReference type="ChEBI" id="CHEBI:15378"/>
        <dbReference type="ChEBI" id="CHEBI:33019"/>
        <dbReference type="ChEBI" id="CHEBI:61194"/>
        <dbReference type="ChEBI" id="CHEBI:61382"/>
        <dbReference type="EC" id="3.6.1.66"/>
    </reaction>
</comment>
<comment type="catalytic activity">
    <reaction evidence="1">
        <text>ITP + H2O = IMP + diphosphate + H(+)</text>
        <dbReference type="Rhea" id="RHEA:29399"/>
        <dbReference type="ChEBI" id="CHEBI:15377"/>
        <dbReference type="ChEBI" id="CHEBI:15378"/>
        <dbReference type="ChEBI" id="CHEBI:33019"/>
        <dbReference type="ChEBI" id="CHEBI:58053"/>
        <dbReference type="ChEBI" id="CHEBI:61402"/>
        <dbReference type="EC" id="3.6.1.66"/>
    </reaction>
</comment>
<comment type="cofactor">
    <cofactor evidence="1">
        <name>Mg(2+)</name>
        <dbReference type="ChEBI" id="CHEBI:18420"/>
    </cofactor>
    <text evidence="1">Binds 1 Mg(2+) ion per subunit.</text>
</comment>
<comment type="subunit">
    <text evidence="1">Homodimer.</text>
</comment>
<comment type="similarity">
    <text evidence="1">Belongs to the HAM1 NTPase family.</text>
</comment>
<keyword id="KW-0378">Hydrolase</keyword>
<keyword id="KW-0460">Magnesium</keyword>
<keyword id="KW-0479">Metal-binding</keyword>
<keyword id="KW-0546">Nucleotide metabolism</keyword>
<keyword id="KW-0547">Nucleotide-binding</keyword>
<keyword id="KW-1185">Reference proteome</keyword>
<feature type="chain" id="PRO_0000178152" description="dITP/XTP pyrophosphatase">
    <location>
        <begin position="1"/>
        <end position="209"/>
    </location>
</feature>
<feature type="active site" description="Proton acceptor" evidence="1">
    <location>
        <position position="70"/>
    </location>
</feature>
<feature type="binding site" evidence="1">
    <location>
        <begin position="7"/>
        <end position="12"/>
    </location>
    <ligand>
        <name>substrate</name>
    </ligand>
</feature>
<feature type="binding site" evidence="1">
    <location>
        <position position="70"/>
    </location>
    <ligand>
        <name>Mg(2+)</name>
        <dbReference type="ChEBI" id="CHEBI:18420"/>
    </ligand>
</feature>
<feature type="binding site" evidence="1">
    <location>
        <position position="71"/>
    </location>
    <ligand>
        <name>substrate</name>
    </ligand>
</feature>
<feature type="binding site" evidence="1">
    <location>
        <begin position="154"/>
        <end position="157"/>
    </location>
    <ligand>
        <name>substrate</name>
    </ligand>
</feature>
<feature type="binding site" evidence="1">
    <location>
        <position position="177"/>
    </location>
    <ligand>
        <name>substrate</name>
    </ligand>
</feature>
<feature type="binding site" evidence="1">
    <location>
        <begin position="182"/>
        <end position="183"/>
    </location>
    <ligand>
        <name>substrate</name>
    </ligand>
</feature>
<sequence length="209" mass="23315">MKILIASSHGYKVRETKVFLKKLGEFDIFSLVDYPSYHPPKETGETPEENAIQKGLFAAQTFRCWTIADDSMLIIPALGGLPGKLSASFAGEQANDKDHRKKLLENMRLLENTIDRSAYFECCVALISPFGKIFKAHASCEGTIAFEERGSSGFGYDPLFVKHDYKQTYAELPEAIKNQVSHRAKALVKLQPYVETVLANHLLAGKESL</sequence>
<dbReference type="EC" id="3.6.1.66" evidence="1"/>
<dbReference type="EMBL" id="AE001273">
    <property type="protein sequence ID" value="AAC68209.1"/>
    <property type="molecule type" value="Genomic_DNA"/>
</dbReference>
<dbReference type="PIR" id="B71493">
    <property type="entry name" value="B71493"/>
</dbReference>
<dbReference type="RefSeq" id="NP_220122.1">
    <property type="nucleotide sequence ID" value="NC_000117.1"/>
</dbReference>
<dbReference type="RefSeq" id="WP_009871973.1">
    <property type="nucleotide sequence ID" value="NC_000117.1"/>
</dbReference>
<dbReference type="SMR" id="O84611"/>
<dbReference type="FunCoup" id="O84611">
    <property type="interactions" value="224"/>
</dbReference>
<dbReference type="STRING" id="272561.CT_606"/>
<dbReference type="EnsemblBacteria" id="AAC68209">
    <property type="protein sequence ID" value="AAC68209"/>
    <property type="gene ID" value="CT_606"/>
</dbReference>
<dbReference type="GeneID" id="884386"/>
<dbReference type="KEGG" id="ctr:CT_606"/>
<dbReference type="PATRIC" id="fig|272561.5.peg.662"/>
<dbReference type="HOGENOM" id="CLU_082080_0_2_0"/>
<dbReference type="InParanoid" id="O84611"/>
<dbReference type="OrthoDB" id="9807456at2"/>
<dbReference type="Proteomes" id="UP000000431">
    <property type="component" value="Chromosome"/>
</dbReference>
<dbReference type="GO" id="GO:0005737">
    <property type="term" value="C:cytoplasm"/>
    <property type="evidence" value="ECO:0000318"/>
    <property type="project" value="GO_Central"/>
</dbReference>
<dbReference type="GO" id="GO:0005829">
    <property type="term" value="C:cytosol"/>
    <property type="evidence" value="ECO:0000318"/>
    <property type="project" value="GO_Central"/>
</dbReference>
<dbReference type="GO" id="GO:0035870">
    <property type="term" value="F:dITP diphosphatase activity"/>
    <property type="evidence" value="ECO:0007669"/>
    <property type="project" value="RHEA"/>
</dbReference>
<dbReference type="GO" id="GO:0036220">
    <property type="term" value="F:ITP diphosphatase activity"/>
    <property type="evidence" value="ECO:0007669"/>
    <property type="project" value="UniProtKB-EC"/>
</dbReference>
<dbReference type="GO" id="GO:0046872">
    <property type="term" value="F:metal ion binding"/>
    <property type="evidence" value="ECO:0007669"/>
    <property type="project" value="UniProtKB-KW"/>
</dbReference>
<dbReference type="GO" id="GO:0047429">
    <property type="term" value="F:nucleoside triphosphate diphosphatase activity"/>
    <property type="evidence" value="ECO:0000318"/>
    <property type="project" value="GO_Central"/>
</dbReference>
<dbReference type="GO" id="GO:0000166">
    <property type="term" value="F:nucleotide binding"/>
    <property type="evidence" value="ECO:0007669"/>
    <property type="project" value="UniProtKB-KW"/>
</dbReference>
<dbReference type="GO" id="GO:0017111">
    <property type="term" value="F:ribonucleoside triphosphate phosphatase activity"/>
    <property type="evidence" value="ECO:0007669"/>
    <property type="project" value="InterPro"/>
</dbReference>
<dbReference type="GO" id="GO:0036222">
    <property type="term" value="F:XTP diphosphatase activity"/>
    <property type="evidence" value="ECO:0007669"/>
    <property type="project" value="RHEA"/>
</dbReference>
<dbReference type="GO" id="GO:0009143">
    <property type="term" value="P:nucleoside triphosphate catabolic process"/>
    <property type="evidence" value="ECO:0000318"/>
    <property type="project" value="GO_Central"/>
</dbReference>
<dbReference type="GO" id="GO:0009117">
    <property type="term" value="P:nucleotide metabolic process"/>
    <property type="evidence" value="ECO:0007669"/>
    <property type="project" value="UniProtKB-KW"/>
</dbReference>
<dbReference type="GO" id="GO:0009146">
    <property type="term" value="P:purine nucleoside triphosphate catabolic process"/>
    <property type="evidence" value="ECO:0007669"/>
    <property type="project" value="UniProtKB-UniRule"/>
</dbReference>
<dbReference type="CDD" id="cd00515">
    <property type="entry name" value="HAM1"/>
    <property type="match status" value="1"/>
</dbReference>
<dbReference type="FunFam" id="3.90.950.10:FF:000001">
    <property type="entry name" value="dITP/XTP pyrophosphatase"/>
    <property type="match status" value="1"/>
</dbReference>
<dbReference type="Gene3D" id="3.90.950.10">
    <property type="match status" value="1"/>
</dbReference>
<dbReference type="HAMAP" id="MF_01405">
    <property type="entry name" value="Non_canon_purine_NTPase"/>
    <property type="match status" value="1"/>
</dbReference>
<dbReference type="InterPro" id="IPR020922">
    <property type="entry name" value="dITP/XTP_pyrophosphatase"/>
</dbReference>
<dbReference type="InterPro" id="IPR029001">
    <property type="entry name" value="ITPase-like_fam"/>
</dbReference>
<dbReference type="InterPro" id="IPR002637">
    <property type="entry name" value="RdgB/HAM1"/>
</dbReference>
<dbReference type="PANTHER" id="PTHR11067:SF9">
    <property type="entry name" value="INOSINE TRIPHOSPHATE PYROPHOSPHATASE"/>
    <property type="match status" value="1"/>
</dbReference>
<dbReference type="PANTHER" id="PTHR11067">
    <property type="entry name" value="INOSINE TRIPHOSPHATE PYROPHOSPHATASE/HAM1 PROTEIN"/>
    <property type="match status" value="1"/>
</dbReference>
<dbReference type="Pfam" id="PF01725">
    <property type="entry name" value="Ham1p_like"/>
    <property type="match status" value="1"/>
</dbReference>
<dbReference type="SUPFAM" id="SSF52972">
    <property type="entry name" value="ITPase-like"/>
    <property type="match status" value="1"/>
</dbReference>
<name>IXTPA_CHLTR</name>
<proteinExistence type="inferred from homology"/>
<reference key="1">
    <citation type="journal article" date="1998" name="Science">
        <title>Genome sequence of an obligate intracellular pathogen of humans: Chlamydia trachomatis.</title>
        <authorList>
            <person name="Stephens R.S."/>
            <person name="Kalman S."/>
            <person name="Lammel C.J."/>
            <person name="Fan J."/>
            <person name="Marathe R."/>
            <person name="Aravind L."/>
            <person name="Mitchell W.P."/>
            <person name="Olinger L."/>
            <person name="Tatusov R.L."/>
            <person name="Zhao Q."/>
            <person name="Koonin E.V."/>
            <person name="Davis R.W."/>
        </authorList>
    </citation>
    <scope>NUCLEOTIDE SEQUENCE [LARGE SCALE GENOMIC DNA]</scope>
    <source>
        <strain>ATCC VR-885 / DSM 19411 / UW-3/Cx</strain>
    </source>
</reference>
<evidence type="ECO:0000255" key="1">
    <source>
        <dbReference type="HAMAP-Rule" id="MF_01405"/>
    </source>
</evidence>
<gene>
    <name type="ordered locus">CT_606</name>
</gene>
<protein>
    <recommendedName>
        <fullName evidence="1">dITP/XTP pyrophosphatase</fullName>
        <ecNumber evidence="1">3.6.1.66</ecNumber>
    </recommendedName>
    <alternativeName>
        <fullName evidence="1">Non-canonical purine NTP pyrophosphatase</fullName>
    </alternativeName>
    <alternativeName>
        <fullName evidence="1">Non-standard purine NTP pyrophosphatase</fullName>
    </alternativeName>
    <alternativeName>
        <fullName evidence="1">Nucleoside-triphosphate diphosphatase</fullName>
    </alternativeName>
    <alternativeName>
        <fullName evidence="1">Nucleoside-triphosphate pyrophosphatase</fullName>
        <shortName evidence="1">NTPase</shortName>
    </alternativeName>
</protein>
<accession>O84611</accession>
<organism>
    <name type="scientific">Chlamydia trachomatis serovar D (strain ATCC VR-885 / DSM 19411 / UW-3/Cx)</name>
    <dbReference type="NCBI Taxonomy" id="272561"/>
    <lineage>
        <taxon>Bacteria</taxon>
        <taxon>Pseudomonadati</taxon>
        <taxon>Chlamydiota</taxon>
        <taxon>Chlamydiia</taxon>
        <taxon>Chlamydiales</taxon>
        <taxon>Chlamydiaceae</taxon>
        <taxon>Chlamydia/Chlamydophila group</taxon>
        <taxon>Chlamydia</taxon>
    </lineage>
</organism>